<name>METJ_HAEIE</name>
<sequence>MANWDGKYISPYAEHGKKSEQVKKITVSIPIKVLEILTNERTRRQLKSLRHATNSELLCEAFLHAFTGQPLPTDADLMKERNDEIPEDAKVLMRELGVDPESWEY</sequence>
<evidence type="ECO:0000255" key="1">
    <source>
        <dbReference type="HAMAP-Rule" id="MF_00744"/>
    </source>
</evidence>
<feature type="chain" id="PRO_1000046491" description="Met repressor">
    <location>
        <begin position="1"/>
        <end position="105"/>
    </location>
</feature>
<dbReference type="EMBL" id="CP000671">
    <property type="protein sequence ID" value="ABQ97797.1"/>
    <property type="molecule type" value="Genomic_DNA"/>
</dbReference>
<dbReference type="SMR" id="A5UAJ6"/>
<dbReference type="KEGG" id="hip:CGSHiEE_01585"/>
<dbReference type="HOGENOM" id="CLU_142318_0_0_6"/>
<dbReference type="GO" id="GO:0005737">
    <property type="term" value="C:cytoplasm"/>
    <property type="evidence" value="ECO:0007669"/>
    <property type="project" value="UniProtKB-SubCell"/>
</dbReference>
<dbReference type="GO" id="GO:0003677">
    <property type="term" value="F:DNA binding"/>
    <property type="evidence" value="ECO:0007669"/>
    <property type="project" value="UniProtKB-KW"/>
</dbReference>
<dbReference type="GO" id="GO:0003700">
    <property type="term" value="F:DNA-binding transcription factor activity"/>
    <property type="evidence" value="ECO:0007669"/>
    <property type="project" value="InterPro"/>
</dbReference>
<dbReference type="GO" id="GO:0009086">
    <property type="term" value="P:methionine biosynthetic process"/>
    <property type="evidence" value="ECO:0007669"/>
    <property type="project" value="UniProtKB-UniRule"/>
</dbReference>
<dbReference type="GO" id="GO:0045892">
    <property type="term" value="P:negative regulation of DNA-templated transcription"/>
    <property type="evidence" value="ECO:0007669"/>
    <property type="project" value="UniProtKB-UniRule"/>
</dbReference>
<dbReference type="CDD" id="cd00490">
    <property type="entry name" value="Met_repressor_MetJ"/>
    <property type="match status" value="1"/>
</dbReference>
<dbReference type="Gene3D" id="1.10.140.10">
    <property type="entry name" value="MET Apo-Repressor, subunit A"/>
    <property type="match status" value="1"/>
</dbReference>
<dbReference type="HAMAP" id="MF_00744">
    <property type="entry name" value="MetJ"/>
    <property type="match status" value="1"/>
</dbReference>
<dbReference type="InterPro" id="IPR002084">
    <property type="entry name" value="Met_repressor_MetJ"/>
</dbReference>
<dbReference type="InterPro" id="IPR023453">
    <property type="entry name" value="Met_repressor_MetJ_dom_sf"/>
</dbReference>
<dbReference type="InterPro" id="IPR010985">
    <property type="entry name" value="Ribbon_hlx_hlx"/>
</dbReference>
<dbReference type="NCBIfam" id="NF003622">
    <property type="entry name" value="PRK05264.1"/>
    <property type="match status" value="1"/>
</dbReference>
<dbReference type="Pfam" id="PF01340">
    <property type="entry name" value="MetJ"/>
    <property type="match status" value="1"/>
</dbReference>
<dbReference type="SUPFAM" id="SSF47598">
    <property type="entry name" value="Ribbon-helix-helix"/>
    <property type="match status" value="1"/>
</dbReference>
<reference key="1">
    <citation type="journal article" date="2007" name="Genome Biol.">
        <title>Characterization and modeling of the Haemophilus influenzae core and supragenomes based on the complete genomic sequences of Rd and 12 clinical nontypeable strains.</title>
        <authorList>
            <person name="Hogg J.S."/>
            <person name="Hu F.Z."/>
            <person name="Janto B."/>
            <person name="Boissy R."/>
            <person name="Hayes J."/>
            <person name="Keefe R."/>
            <person name="Post J.C."/>
            <person name="Ehrlich G.D."/>
        </authorList>
    </citation>
    <scope>NUCLEOTIDE SEQUENCE [LARGE SCALE GENOMIC DNA]</scope>
    <source>
        <strain>PittEE</strain>
    </source>
</reference>
<proteinExistence type="inferred from homology"/>
<gene>
    <name evidence="1" type="primary">metJ</name>
    <name type="ordered locus">CGSHiEE_01585</name>
</gene>
<comment type="function">
    <text evidence="1">This regulatory protein, when combined with SAM (S-adenosylmethionine) represses the expression of the methionine regulon and of enzymes involved in SAM synthesis.</text>
</comment>
<comment type="subunit">
    <text evidence="1">Homodimer.</text>
</comment>
<comment type="subcellular location">
    <subcellularLocation>
        <location evidence="1">Cytoplasm</location>
    </subcellularLocation>
</comment>
<comment type="domain">
    <text>Does not bind DNA by a helix-turn-helix motif.</text>
</comment>
<comment type="similarity">
    <text evidence="1">Belongs to the MetJ family.</text>
</comment>
<keyword id="KW-0028">Amino-acid biosynthesis</keyword>
<keyword id="KW-0963">Cytoplasm</keyword>
<keyword id="KW-0238">DNA-binding</keyword>
<keyword id="KW-0486">Methionine biosynthesis</keyword>
<keyword id="KW-0678">Repressor</keyword>
<keyword id="KW-0804">Transcription</keyword>
<keyword id="KW-0805">Transcription regulation</keyword>
<accession>A5UAJ6</accession>
<organism>
    <name type="scientific">Haemophilus influenzae (strain PittEE)</name>
    <dbReference type="NCBI Taxonomy" id="374930"/>
    <lineage>
        <taxon>Bacteria</taxon>
        <taxon>Pseudomonadati</taxon>
        <taxon>Pseudomonadota</taxon>
        <taxon>Gammaproteobacteria</taxon>
        <taxon>Pasteurellales</taxon>
        <taxon>Pasteurellaceae</taxon>
        <taxon>Haemophilus</taxon>
    </lineage>
</organism>
<protein>
    <recommendedName>
        <fullName evidence="1">Met repressor</fullName>
    </recommendedName>
    <alternativeName>
        <fullName evidence="1">Met regulon regulatory protein MetJ</fullName>
    </alternativeName>
</protein>